<evidence type="ECO:0000250" key="1"/>
<evidence type="ECO:0000250" key="2">
    <source>
        <dbReference type="UniProtKB" id="Q3TTE0"/>
    </source>
</evidence>
<evidence type="ECO:0000255" key="3"/>
<evidence type="ECO:0000255" key="4">
    <source>
        <dbReference type="PROSITE-ProRule" id="PRU00068"/>
    </source>
</evidence>
<evidence type="ECO:0000255" key="5">
    <source>
        <dbReference type="PROSITE-ProRule" id="PRU00076"/>
    </source>
</evidence>
<evidence type="ECO:0000255" key="6">
    <source>
        <dbReference type="PROSITE-ProRule" id="PRU00276"/>
    </source>
</evidence>
<evidence type="ECO:0000256" key="7">
    <source>
        <dbReference type="SAM" id="MobiDB-lite"/>
    </source>
</evidence>
<evidence type="ECO:0000269" key="8">
    <source>
    </source>
</evidence>
<evidence type="ECO:0000305" key="9"/>
<comment type="function">
    <text evidence="1">This is a non catalytic metalloprotease-like protein. May play a role in sperm-egg fusion (By similarity).</text>
</comment>
<comment type="subunit">
    <text evidence="2">Interacts with TEX101.</text>
</comment>
<comment type="subcellular location">
    <subcellularLocation>
        <location evidence="9">Membrane</location>
        <topology evidence="9">Single-pass type I membrane protein</topology>
    </subcellularLocation>
</comment>
<comment type="tissue specificity">
    <text evidence="8">Detected in testis.</text>
</comment>
<comment type="PTM">
    <text evidence="1">Subject to proteolytic processing during epididymal transit of spermatozoa.</text>
</comment>
<comment type="caution">
    <text evidence="9">Not expected to have protease activity.</text>
</comment>
<protein>
    <recommendedName>
        <fullName>Disintegrin and metalloproteinase domain-containing protein 5</fullName>
    </recommendedName>
</protein>
<name>ADAM5_CAVPO</name>
<keyword id="KW-1015">Disulfide bond</keyword>
<keyword id="KW-0245">EGF-like domain</keyword>
<keyword id="KW-0325">Glycoprotein</keyword>
<keyword id="KW-0472">Membrane</keyword>
<keyword id="KW-1185">Reference proteome</keyword>
<keyword id="KW-0732">Signal</keyword>
<keyword id="KW-0812">Transmembrane</keyword>
<keyword id="KW-1133">Transmembrane helix</keyword>
<accession>Q60472</accession>
<sequence>MFLVLVLLTGLGRLYAGNNPRKTFVQTTVPERISSVDTRRHLEHNVAYNITLKGKSYVVRLKKESFLSSGSVIYFYDNRGVQRSQPLLPEMDCSYSGYVAGFPHSRVVFATCLGLRGVIQFENVSYAIEPLEVLSGFTHMIYEENNDNTHVPLFGKNNSYARIHNLESQGRRSVHKTTVSKLSPRYIDMYIVVNKNLFDYLGSDIKTVTQKIIQVIGLVNAMFTQLKLHVLISSIEIWSRSNKVTNTRRPDDDLFRFSDWKRKHVSLKSHYVAYLLTFDKYPESIGATFPENICNEEYASGIAVYPAGLSLESFAVIIVQLLSLSAGVMYDTSDSCYCSTDVCTMTQEAVFASGLKDFSTCSMDNFKYFASQYGLTCLRNTSYDMPIYKQFPPRRRRICGNSIREEGEECDCGTLRNCTHKKCCDPMQCRMKKGAKCGTGPCCTVDCQFQKANVLCRKSVDKDCDFDEYCNGRSGDCVHDTYAQNGHFCDSGGAFCFNGRCRTHDRQCQALIGGDSRGAPFACYDEVNSRGDVYGNCGRHQCYIQHALCGKLVCTWPHKQLVSRVNLSVVYAHVRDDICVATTKTVRKIIRDLSLTTVLLPEDRDETFVEDGTICGPGQYCDKWFCKEVQFINNGSCNAEIHCQGRGICNNLDNCHCHKGFVPPECAPKKGQFGSLDDGHLVETTKTSGFRKINMRRGYVVLSTKRFQLIFYIGIPVIIIVAAILIKQNQLGKLFCRGEKEHMSSVSEDGSRSVTLSATESKFPADTEHSNKEEDAQ</sequence>
<reference key="1">
    <citation type="journal article" date="1995" name="Dev. Biol.">
        <title>ADAM, a widely distributed and developmentally regulated gene family encoding membrane proteins with a disintegrin and metalloprotease domain.</title>
        <authorList>
            <person name="Wolfsberg T.G."/>
            <person name="Straight P.D."/>
            <person name="Gerena R.L."/>
            <person name="Huovila A.-P."/>
            <person name="Primakoff P."/>
            <person name="Myles D.G."/>
            <person name="White J.M."/>
        </authorList>
    </citation>
    <scope>NUCLEOTIDE SEQUENCE [MRNA]</scope>
    <scope>TISSUE SPECIFICITY</scope>
    <source>
        <tissue>Testis</tissue>
    </source>
</reference>
<feature type="signal peptide" evidence="3">
    <location>
        <begin position="1"/>
        <end position="16"/>
    </location>
</feature>
<feature type="propeptide" id="PRO_0000349298" evidence="3">
    <location>
        <begin position="17"/>
        <end position="142"/>
    </location>
</feature>
<feature type="chain" id="PRO_5000144556" description="Disintegrin and metalloproteinase domain-containing protein 5">
    <location>
        <begin position="143"/>
        <end position="777"/>
    </location>
</feature>
<feature type="topological domain" description="Extracellular" evidence="3">
    <location>
        <begin position="17"/>
        <end position="706"/>
    </location>
</feature>
<feature type="transmembrane region" description="Helical" evidence="3">
    <location>
        <begin position="707"/>
        <end position="727"/>
    </location>
</feature>
<feature type="topological domain" description="Cytoplasmic" evidence="3">
    <location>
        <begin position="728"/>
        <end position="777"/>
    </location>
</feature>
<feature type="domain" description="Peptidase M12B" evidence="6">
    <location>
        <begin position="185"/>
        <end position="382"/>
    </location>
</feature>
<feature type="domain" description="Disintegrin" evidence="4">
    <location>
        <begin position="396"/>
        <end position="485"/>
    </location>
</feature>
<feature type="domain" description="EGF-like" evidence="5">
    <location>
        <begin position="633"/>
        <end position="667"/>
    </location>
</feature>
<feature type="region of interest" description="Disordered" evidence="7">
    <location>
        <begin position="744"/>
        <end position="777"/>
    </location>
</feature>
<feature type="compositionally biased region" description="Polar residues" evidence="7">
    <location>
        <begin position="744"/>
        <end position="760"/>
    </location>
</feature>
<feature type="compositionally biased region" description="Basic and acidic residues" evidence="7">
    <location>
        <begin position="763"/>
        <end position="777"/>
    </location>
</feature>
<feature type="glycosylation site" description="N-linked (GlcNAc...) asparagine" evidence="3">
    <location>
        <position position="49"/>
    </location>
</feature>
<feature type="glycosylation site" description="N-linked (GlcNAc...) asparagine" evidence="3">
    <location>
        <position position="123"/>
    </location>
</feature>
<feature type="glycosylation site" description="N-linked (GlcNAc...) asparagine" evidence="3">
    <location>
        <position position="566"/>
    </location>
</feature>
<feature type="disulfide bond" evidence="1">
    <location>
        <begin position="294"/>
        <end position="377"/>
    </location>
</feature>
<feature type="disulfide bond" evidence="1">
    <location>
        <begin position="336"/>
        <end position="361"/>
    </location>
</feature>
<feature type="disulfide bond" evidence="1">
    <location>
        <begin position="338"/>
        <end position="343"/>
    </location>
</feature>
<feature type="disulfide bond" evidence="1">
    <location>
        <begin position="456"/>
        <end position="477"/>
    </location>
</feature>
<feature type="disulfide bond" evidence="1">
    <location>
        <begin position="637"/>
        <end position="649"/>
    </location>
</feature>
<feature type="disulfide bond" evidence="1">
    <location>
        <begin position="643"/>
        <end position="655"/>
    </location>
</feature>
<feature type="disulfide bond" evidence="1">
    <location>
        <begin position="657"/>
        <end position="666"/>
    </location>
</feature>
<proteinExistence type="evidence at transcript level"/>
<organism>
    <name type="scientific">Cavia porcellus</name>
    <name type="common">Guinea pig</name>
    <dbReference type="NCBI Taxonomy" id="10141"/>
    <lineage>
        <taxon>Eukaryota</taxon>
        <taxon>Metazoa</taxon>
        <taxon>Chordata</taxon>
        <taxon>Craniata</taxon>
        <taxon>Vertebrata</taxon>
        <taxon>Euteleostomi</taxon>
        <taxon>Mammalia</taxon>
        <taxon>Eutheria</taxon>
        <taxon>Euarchontoglires</taxon>
        <taxon>Glires</taxon>
        <taxon>Rodentia</taxon>
        <taxon>Hystricomorpha</taxon>
        <taxon>Caviidae</taxon>
        <taxon>Cavia</taxon>
    </lineage>
</organism>
<gene>
    <name type="primary">ADAM5</name>
</gene>
<dbReference type="EMBL" id="U22060">
    <property type="protein sequence ID" value="AAA74918.1"/>
    <property type="molecule type" value="mRNA"/>
</dbReference>
<dbReference type="PIR" id="I48100">
    <property type="entry name" value="I48100"/>
</dbReference>
<dbReference type="RefSeq" id="NP_001166570.1">
    <property type="nucleotide sequence ID" value="NM_001173099.1"/>
</dbReference>
<dbReference type="SMR" id="Q60472"/>
<dbReference type="FunCoup" id="Q60472">
    <property type="interactions" value="9"/>
</dbReference>
<dbReference type="STRING" id="10141.ENSCPOP00000009474"/>
<dbReference type="MEROPS" id="M12.957"/>
<dbReference type="GlyCosmos" id="Q60472">
    <property type="glycosylation" value="3 sites, No reported glycans"/>
</dbReference>
<dbReference type="GeneID" id="100379225"/>
<dbReference type="KEGG" id="cpoc:100379225"/>
<dbReference type="InParanoid" id="Q60472"/>
<dbReference type="OrthoDB" id="5951731at2759"/>
<dbReference type="Proteomes" id="UP000005447">
    <property type="component" value="Unassembled WGS sequence"/>
</dbReference>
<dbReference type="GO" id="GO:0005886">
    <property type="term" value="C:plasma membrane"/>
    <property type="evidence" value="ECO:0007669"/>
    <property type="project" value="TreeGrafter"/>
</dbReference>
<dbReference type="GO" id="GO:0004222">
    <property type="term" value="F:metalloendopeptidase activity"/>
    <property type="evidence" value="ECO:0007669"/>
    <property type="project" value="InterPro"/>
</dbReference>
<dbReference type="GO" id="GO:0007339">
    <property type="term" value="P:binding of sperm to zona pellucida"/>
    <property type="evidence" value="ECO:0007669"/>
    <property type="project" value="TreeGrafter"/>
</dbReference>
<dbReference type="GO" id="GO:0007155">
    <property type="term" value="P:cell adhesion"/>
    <property type="evidence" value="ECO:0007669"/>
    <property type="project" value="TreeGrafter"/>
</dbReference>
<dbReference type="GO" id="GO:0008584">
    <property type="term" value="P:male gonad development"/>
    <property type="evidence" value="ECO:0007669"/>
    <property type="project" value="TreeGrafter"/>
</dbReference>
<dbReference type="GO" id="GO:0006508">
    <property type="term" value="P:proteolysis"/>
    <property type="evidence" value="ECO:0007669"/>
    <property type="project" value="InterPro"/>
</dbReference>
<dbReference type="CDD" id="cd04269">
    <property type="entry name" value="ZnMc_adamalysin_II_like"/>
    <property type="match status" value="1"/>
</dbReference>
<dbReference type="FunFam" id="4.10.70.10:FF:000003">
    <property type="entry name" value="Disintegrin and metalloproteinase domain-containing protein 17"/>
    <property type="match status" value="1"/>
</dbReference>
<dbReference type="Gene3D" id="3.40.390.10">
    <property type="entry name" value="Collagenase (Catalytic Domain)"/>
    <property type="match status" value="1"/>
</dbReference>
<dbReference type="Gene3D" id="4.10.70.10">
    <property type="entry name" value="Disintegrin domain"/>
    <property type="match status" value="1"/>
</dbReference>
<dbReference type="InterPro" id="IPR006586">
    <property type="entry name" value="ADAM_Cys-rich"/>
</dbReference>
<dbReference type="InterPro" id="IPR018358">
    <property type="entry name" value="Disintegrin_CS"/>
</dbReference>
<dbReference type="InterPro" id="IPR001762">
    <property type="entry name" value="Disintegrin_dom"/>
</dbReference>
<dbReference type="InterPro" id="IPR036436">
    <property type="entry name" value="Disintegrin_dom_sf"/>
</dbReference>
<dbReference type="InterPro" id="IPR000742">
    <property type="entry name" value="EGF-like_dom"/>
</dbReference>
<dbReference type="InterPro" id="IPR024079">
    <property type="entry name" value="MetalloPept_cat_dom_sf"/>
</dbReference>
<dbReference type="InterPro" id="IPR001590">
    <property type="entry name" value="Peptidase_M12B"/>
</dbReference>
<dbReference type="InterPro" id="IPR002870">
    <property type="entry name" value="Peptidase_M12B_N"/>
</dbReference>
<dbReference type="InterPro" id="IPR034027">
    <property type="entry name" value="Reprolysin_adamalysin"/>
</dbReference>
<dbReference type="PANTHER" id="PTHR11905">
    <property type="entry name" value="ADAM A DISINTEGRIN AND METALLOPROTEASE DOMAIN"/>
    <property type="match status" value="1"/>
</dbReference>
<dbReference type="PANTHER" id="PTHR11905:SF28">
    <property type="entry name" value="DISINTEGRIN AND METALLOPROTEINASE DOMAIN-CONTAINING PROTEIN 5"/>
    <property type="match status" value="1"/>
</dbReference>
<dbReference type="Pfam" id="PF08516">
    <property type="entry name" value="ADAM_CR"/>
    <property type="match status" value="1"/>
</dbReference>
<dbReference type="Pfam" id="PF00200">
    <property type="entry name" value="Disintegrin"/>
    <property type="match status" value="1"/>
</dbReference>
<dbReference type="Pfam" id="PF01562">
    <property type="entry name" value="Pep_M12B_propep"/>
    <property type="match status" value="1"/>
</dbReference>
<dbReference type="Pfam" id="PF01421">
    <property type="entry name" value="Reprolysin"/>
    <property type="match status" value="1"/>
</dbReference>
<dbReference type="SMART" id="SM00608">
    <property type="entry name" value="ACR"/>
    <property type="match status" value="1"/>
</dbReference>
<dbReference type="SMART" id="SM00050">
    <property type="entry name" value="DISIN"/>
    <property type="match status" value="1"/>
</dbReference>
<dbReference type="SUPFAM" id="SSF57552">
    <property type="entry name" value="Blood coagulation inhibitor (disintegrin)"/>
    <property type="match status" value="1"/>
</dbReference>
<dbReference type="SUPFAM" id="SSF55486">
    <property type="entry name" value="Metalloproteases ('zincins'), catalytic domain"/>
    <property type="match status" value="1"/>
</dbReference>
<dbReference type="PROSITE" id="PS50215">
    <property type="entry name" value="ADAM_MEPRO"/>
    <property type="match status" value="1"/>
</dbReference>
<dbReference type="PROSITE" id="PS00427">
    <property type="entry name" value="DISINTEGRIN_1"/>
    <property type="match status" value="1"/>
</dbReference>
<dbReference type="PROSITE" id="PS50214">
    <property type="entry name" value="DISINTEGRIN_2"/>
    <property type="match status" value="1"/>
</dbReference>
<dbReference type="PROSITE" id="PS01186">
    <property type="entry name" value="EGF_2"/>
    <property type="match status" value="1"/>
</dbReference>
<dbReference type="PROSITE" id="PS50026">
    <property type="entry name" value="EGF_3"/>
    <property type="match status" value="1"/>
</dbReference>